<evidence type="ECO:0000250" key="1"/>
<evidence type="ECO:0000250" key="2">
    <source>
        <dbReference type="UniProtKB" id="Q7Z094"/>
    </source>
</evidence>
<evidence type="ECO:0000303" key="3">
    <source>
    </source>
</evidence>
<evidence type="ECO:0000305" key="4"/>
<evidence type="ECO:0000305" key="5">
    <source>
    </source>
</evidence>
<sequence length="74" mass="8364">MMFRLTSVGCFLLVIVLLNVAVLTNASCRNEGAMCSFGFQCCKKECCMSHCTDFCRNPDKRAHGHGLLRFWGQR</sequence>
<organism>
    <name type="scientific">Conus planorbis</name>
    <name type="common">Planorbis cone</name>
    <dbReference type="NCBI Taxonomy" id="97183"/>
    <lineage>
        <taxon>Eukaryota</taxon>
        <taxon>Metazoa</taxon>
        <taxon>Spiralia</taxon>
        <taxon>Lophotrochozoa</taxon>
        <taxon>Mollusca</taxon>
        <taxon>Gastropoda</taxon>
        <taxon>Caenogastropoda</taxon>
        <taxon>Neogastropoda</taxon>
        <taxon>Conoidea</taxon>
        <taxon>Conidae</taxon>
        <taxon>Conus</taxon>
        <taxon>Strategoconus</taxon>
    </lineage>
</organism>
<protein>
    <recommendedName>
        <fullName evidence="4">Conotoxin Vt11.7</fullName>
    </recommendedName>
    <alternativeName>
        <fullName evidence="3">Conotoxin Vi11.7</fullName>
    </alternativeName>
</protein>
<dbReference type="EMBL" id="GQ184579">
    <property type="protein sequence ID" value="ACU30736.1"/>
    <property type="molecule type" value="mRNA"/>
</dbReference>
<dbReference type="SMR" id="C7DQX9"/>
<dbReference type="GO" id="GO:0005576">
    <property type="term" value="C:extracellular region"/>
    <property type="evidence" value="ECO:0007669"/>
    <property type="project" value="UniProtKB-SubCell"/>
</dbReference>
<dbReference type="GO" id="GO:0090729">
    <property type="term" value="F:toxin activity"/>
    <property type="evidence" value="ECO:0007669"/>
    <property type="project" value="UniProtKB-KW"/>
</dbReference>
<dbReference type="InterPro" id="IPR013141">
    <property type="entry name" value="Conotoxin-I_CS"/>
</dbReference>
<dbReference type="InterPro" id="IPR020242">
    <property type="entry name" value="Conotoxin_I2"/>
</dbReference>
<dbReference type="Pfam" id="PF17557">
    <property type="entry name" value="Conotoxin_I2"/>
    <property type="match status" value="1"/>
</dbReference>
<dbReference type="PROSITE" id="PS60019">
    <property type="entry name" value="I_CONOTOXIN"/>
    <property type="match status" value="1"/>
</dbReference>
<proteinExistence type="inferred from homology"/>
<feature type="signal peptide" evidence="1">
    <location>
        <begin position="1"/>
        <end position="26"/>
    </location>
</feature>
<feature type="peptide" id="PRO_0000392047" description="Conotoxin Vt11.7">
    <location>
        <begin position="27"/>
        <end position="59"/>
    </location>
</feature>
<feature type="propeptide" id="PRO_0000392048" evidence="1">
    <location>
        <begin position="62"/>
        <end position="74"/>
    </location>
</feature>
<feature type="disulfide bond" evidence="2">
    <location>
        <begin position="28"/>
        <end position="42"/>
    </location>
</feature>
<feature type="disulfide bond" evidence="2">
    <location>
        <begin position="35"/>
        <end position="47"/>
    </location>
</feature>
<feature type="disulfide bond" evidence="2">
    <location>
        <begin position="41"/>
        <end position="51"/>
    </location>
</feature>
<feature type="disulfide bond" evidence="2">
    <location>
        <begin position="46"/>
        <end position="55"/>
    </location>
</feature>
<comment type="subcellular location">
    <subcellularLocation>
        <location evidence="5">Secreted</location>
    </subcellularLocation>
</comment>
<comment type="tissue specificity">
    <text evidence="5">Expressed by the venom duct.</text>
</comment>
<comment type="domain">
    <text evidence="4">The cysteine framework is XI (C-C-CC-CC-C-C).</text>
</comment>
<comment type="similarity">
    <text evidence="4">Belongs to the conotoxin I2 superfamily.</text>
</comment>
<comment type="caution">
    <text evidence="4">The status of C.vitulinus is unclear.</text>
</comment>
<name>I2B7_CONPO</name>
<accession>C7DQX9</accession>
<reference key="1">
    <citation type="journal article" date="2009" name="Peptides">
        <title>Identification of novel I-superfamily conopeptides from several clades of Conus species found in the South China Sea.</title>
        <authorList>
            <person name="Liu Z."/>
            <person name="Xu N."/>
            <person name="Hu J."/>
            <person name="Zhao C."/>
            <person name="Yu Z."/>
            <person name="Dai Q."/>
        </authorList>
    </citation>
    <scope>NUCLEOTIDE SEQUENCE [MRNA]</scope>
    <source>
        <strain>C.vitulinus</strain>
        <tissue>Venom duct</tissue>
    </source>
</reference>
<keyword id="KW-0165">Cleavage on pair of basic residues</keyword>
<keyword id="KW-1015">Disulfide bond</keyword>
<keyword id="KW-0964">Secreted</keyword>
<keyword id="KW-0732">Signal</keyword>
<keyword id="KW-0800">Toxin</keyword>